<keyword id="KW-0963">Cytoplasm</keyword>
<keyword id="KW-0520">NAD</keyword>
<keyword id="KW-0521">NADP</keyword>
<keyword id="KW-0560">Oxidoreductase</keyword>
<reference key="1">
    <citation type="journal article" date="2009" name="BMC Genomics">
        <title>Pseudogene accumulation in the evolutionary histories of Salmonella enterica serovars Paratyphi A and Typhi.</title>
        <authorList>
            <person name="Holt K.E."/>
            <person name="Thomson N.R."/>
            <person name="Wain J."/>
            <person name="Langridge G.C."/>
            <person name="Hasan R."/>
            <person name="Bhutta Z.A."/>
            <person name="Quail M.A."/>
            <person name="Norbertczak H."/>
            <person name="Walker D."/>
            <person name="Simmonds M."/>
            <person name="White B."/>
            <person name="Bason N."/>
            <person name="Mungall K."/>
            <person name="Dougan G."/>
            <person name="Parkhill J."/>
        </authorList>
    </citation>
    <scope>NUCLEOTIDE SEQUENCE [LARGE SCALE GENOMIC DNA]</scope>
    <source>
        <strain>AKU_12601</strain>
    </source>
</reference>
<feature type="chain" id="PRO_1000187301" description="Glyoxylate/hydroxypyruvate reductase B">
    <location>
        <begin position="1"/>
        <end position="324"/>
    </location>
</feature>
<feature type="active site" evidence="1">
    <location>
        <position position="237"/>
    </location>
</feature>
<feature type="active site" evidence="1">
    <location>
        <position position="266"/>
    </location>
</feature>
<feature type="active site" description="Proton donor" evidence="1">
    <location>
        <position position="285"/>
    </location>
</feature>
<evidence type="ECO:0000255" key="1">
    <source>
        <dbReference type="HAMAP-Rule" id="MF_01667"/>
    </source>
</evidence>
<protein>
    <recommendedName>
        <fullName evidence="1">Glyoxylate/hydroxypyruvate reductase B</fullName>
        <ecNumber evidence="1">1.1.1.79</ecNumber>
        <ecNumber evidence="1">1.1.1.81</ecNumber>
    </recommendedName>
</protein>
<accession>B5BHT3</accession>
<comment type="function">
    <text evidence="1">Catalyzes the NADPH-dependent reduction of glyoxylate and hydroxypyruvate into glycolate and glycerate, respectively.</text>
</comment>
<comment type="catalytic activity">
    <reaction evidence="1">
        <text>glycolate + NADP(+) = glyoxylate + NADPH + H(+)</text>
        <dbReference type="Rhea" id="RHEA:10992"/>
        <dbReference type="ChEBI" id="CHEBI:15378"/>
        <dbReference type="ChEBI" id="CHEBI:29805"/>
        <dbReference type="ChEBI" id="CHEBI:36655"/>
        <dbReference type="ChEBI" id="CHEBI:57783"/>
        <dbReference type="ChEBI" id="CHEBI:58349"/>
        <dbReference type="EC" id="1.1.1.79"/>
    </reaction>
</comment>
<comment type="catalytic activity">
    <reaction evidence="1">
        <text>(R)-glycerate + NAD(+) = 3-hydroxypyruvate + NADH + H(+)</text>
        <dbReference type="Rhea" id="RHEA:17905"/>
        <dbReference type="ChEBI" id="CHEBI:15378"/>
        <dbReference type="ChEBI" id="CHEBI:16659"/>
        <dbReference type="ChEBI" id="CHEBI:17180"/>
        <dbReference type="ChEBI" id="CHEBI:57540"/>
        <dbReference type="ChEBI" id="CHEBI:57945"/>
        <dbReference type="EC" id="1.1.1.81"/>
    </reaction>
</comment>
<comment type="catalytic activity">
    <reaction evidence="1">
        <text>(R)-glycerate + NADP(+) = 3-hydroxypyruvate + NADPH + H(+)</text>
        <dbReference type="Rhea" id="RHEA:18657"/>
        <dbReference type="ChEBI" id="CHEBI:15378"/>
        <dbReference type="ChEBI" id="CHEBI:16659"/>
        <dbReference type="ChEBI" id="CHEBI:17180"/>
        <dbReference type="ChEBI" id="CHEBI:57783"/>
        <dbReference type="ChEBI" id="CHEBI:58349"/>
        <dbReference type="EC" id="1.1.1.81"/>
    </reaction>
</comment>
<comment type="subunit">
    <text evidence="1">Homodimer.</text>
</comment>
<comment type="subcellular location">
    <subcellularLocation>
        <location evidence="1">Cytoplasm</location>
    </subcellularLocation>
</comment>
<comment type="similarity">
    <text evidence="1">Belongs to the D-isomer specific 2-hydroxyacid dehydrogenase family. GhrB subfamily.</text>
</comment>
<gene>
    <name evidence="1" type="primary">ghrB</name>
    <name type="ordered locus">SSPA3265</name>
</gene>
<dbReference type="EC" id="1.1.1.79" evidence="1"/>
<dbReference type="EC" id="1.1.1.81" evidence="1"/>
<dbReference type="EMBL" id="FM200053">
    <property type="protein sequence ID" value="CAR61526.1"/>
    <property type="molecule type" value="Genomic_DNA"/>
</dbReference>
<dbReference type="RefSeq" id="WP_000804679.1">
    <property type="nucleotide sequence ID" value="NC_011147.1"/>
</dbReference>
<dbReference type="SMR" id="B5BHT3"/>
<dbReference type="KEGG" id="sek:SSPA3265"/>
<dbReference type="HOGENOM" id="CLU_019796_1_2_6"/>
<dbReference type="Proteomes" id="UP000001869">
    <property type="component" value="Chromosome"/>
</dbReference>
<dbReference type="GO" id="GO:0005829">
    <property type="term" value="C:cytosol"/>
    <property type="evidence" value="ECO:0007669"/>
    <property type="project" value="TreeGrafter"/>
</dbReference>
<dbReference type="GO" id="GO:0005886">
    <property type="term" value="C:plasma membrane"/>
    <property type="evidence" value="ECO:0007669"/>
    <property type="project" value="UniProtKB-UniRule"/>
</dbReference>
<dbReference type="GO" id="GO:0030267">
    <property type="term" value="F:glyoxylate reductase (NADPH) activity"/>
    <property type="evidence" value="ECO:0007669"/>
    <property type="project" value="UniProtKB-UniRule"/>
</dbReference>
<dbReference type="GO" id="GO:0008465">
    <property type="term" value="F:hydroxypyruvate reductase (NADH) activity"/>
    <property type="evidence" value="ECO:0007669"/>
    <property type="project" value="RHEA"/>
</dbReference>
<dbReference type="GO" id="GO:0120509">
    <property type="term" value="F:hydroxypyruvate reductase (NADPH) activity"/>
    <property type="evidence" value="ECO:0007669"/>
    <property type="project" value="RHEA"/>
</dbReference>
<dbReference type="GO" id="GO:0051287">
    <property type="term" value="F:NAD binding"/>
    <property type="evidence" value="ECO:0007669"/>
    <property type="project" value="InterPro"/>
</dbReference>
<dbReference type="CDD" id="cd05301">
    <property type="entry name" value="GDH"/>
    <property type="match status" value="1"/>
</dbReference>
<dbReference type="FunFam" id="3.40.50.720:FF:000026">
    <property type="entry name" value="Glyoxylate/hydroxypyruvate reductase B"/>
    <property type="match status" value="1"/>
</dbReference>
<dbReference type="Gene3D" id="3.40.50.720">
    <property type="entry name" value="NAD(P)-binding Rossmann-like Domain"/>
    <property type="match status" value="2"/>
</dbReference>
<dbReference type="HAMAP" id="MF_01667">
    <property type="entry name" value="2_Hacid_dh_C_GhrB"/>
    <property type="match status" value="1"/>
</dbReference>
<dbReference type="InterPro" id="IPR050223">
    <property type="entry name" value="D-isomer_2-hydroxyacid_DH"/>
</dbReference>
<dbReference type="InterPro" id="IPR006139">
    <property type="entry name" value="D-isomer_2_OHA_DH_cat_dom"/>
</dbReference>
<dbReference type="InterPro" id="IPR029753">
    <property type="entry name" value="D-isomer_DH_CS"/>
</dbReference>
<dbReference type="InterPro" id="IPR006140">
    <property type="entry name" value="D-isomer_DH_NAD-bd"/>
</dbReference>
<dbReference type="InterPro" id="IPR023756">
    <property type="entry name" value="Glyo/OHPyrv_Rdtase_B"/>
</dbReference>
<dbReference type="InterPro" id="IPR036291">
    <property type="entry name" value="NAD(P)-bd_dom_sf"/>
</dbReference>
<dbReference type="NCBIfam" id="NF011938">
    <property type="entry name" value="PRK15409.1"/>
    <property type="match status" value="1"/>
</dbReference>
<dbReference type="PANTHER" id="PTHR10996">
    <property type="entry name" value="2-HYDROXYACID DEHYDROGENASE-RELATED"/>
    <property type="match status" value="1"/>
</dbReference>
<dbReference type="PANTHER" id="PTHR10996:SF283">
    <property type="entry name" value="GLYOXYLATE_HYDROXYPYRUVATE REDUCTASE B"/>
    <property type="match status" value="1"/>
</dbReference>
<dbReference type="Pfam" id="PF00389">
    <property type="entry name" value="2-Hacid_dh"/>
    <property type="match status" value="1"/>
</dbReference>
<dbReference type="Pfam" id="PF02826">
    <property type="entry name" value="2-Hacid_dh_C"/>
    <property type="match status" value="1"/>
</dbReference>
<dbReference type="SUPFAM" id="SSF52283">
    <property type="entry name" value="Formate/glycerate dehydrogenase catalytic domain-like"/>
    <property type="match status" value="1"/>
</dbReference>
<dbReference type="SUPFAM" id="SSF51735">
    <property type="entry name" value="NAD(P)-binding Rossmann-fold domains"/>
    <property type="match status" value="1"/>
</dbReference>
<dbReference type="PROSITE" id="PS00670">
    <property type="entry name" value="D_2_HYDROXYACID_DH_2"/>
    <property type="match status" value="1"/>
</dbReference>
<dbReference type="PROSITE" id="PS00671">
    <property type="entry name" value="D_2_HYDROXYACID_DH_3"/>
    <property type="match status" value="1"/>
</dbReference>
<organism>
    <name type="scientific">Salmonella paratyphi A (strain AKU_12601)</name>
    <dbReference type="NCBI Taxonomy" id="554290"/>
    <lineage>
        <taxon>Bacteria</taxon>
        <taxon>Pseudomonadati</taxon>
        <taxon>Pseudomonadota</taxon>
        <taxon>Gammaproteobacteria</taxon>
        <taxon>Enterobacterales</taxon>
        <taxon>Enterobacteriaceae</taxon>
        <taxon>Salmonella</taxon>
    </lineage>
</organism>
<proteinExistence type="inferred from homology"/>
<name>GHRB_SALPK</name>
<sequence length="324" mass="35352">MKPSIILYKTLPDDLLHRLEAHFTVTQVPNLHPETVARHAQAFASAQGLLGASETVNRALLEKMPALRAASTISVGYDNVEVDALTARKIVLMHTPAVLTETVADTVMALMLATARRVVDVAERVKAGEWTESIGPAWFGVDVHHKTLGIVGMGRIGMALAQRAHFGFTMPVLYHARRRHQEAEDRFNARYCDLDTLLQEADFVCVILPLTTETRHLFGTTQFARMKSSAIFINAGRGPVVDENALIAALQNGEIYAAGLDVFEHEPLSVDSPLLNMSNVVAVPHIGSATHETRYNMMACAVDNLIDALQGKIEKNCVNPQAAG</sequence>